<comment type="function">
    <text>Anti-streptococcal group A carbohydrate antibody.</text>
</comment>
<sequence>DIVMTQAVFSNPVTLGTSASISCRSSKSLLHSNGITYLYWYLQKPGQSPQLLLYQMSNLASGVPDRFSSSGSGTDFTLRISRVEAEDVGVYYCAHNLELPYTFGGGTKLEIKR</sequence>
<keyword id="KW-0002">3D-structure</keyword>
<keyword id="KW-1064">Adaptive immunity</keyword>
<keyword id="KW-0903">Direct protein sequencing</keyword>
<keyword id="KW-1015">Disulfide bond</keyword>
<keyword id="KW-0374">Hybridoma</keyword>
<keyword id="KW-0391">Immunity</keyword>
<keyword id="KW-1280">Immunoglobulin</keyword>
<keyword id="KW-1185">Reference proteome</keyword>
<protein>
    <recommendedName>
        <fullName>Ig kappa chain V-II region 17S29.1</fullName>
    </recommendedName>
</protein>
<name>KV2A5_MOUSE</name>
<feature type="chain" id="PRO_0000059774" description="Ig kappa chain V-II region 17S29.1">
    <location>
        <begin position="1"/>
        <end position="113" status="greater than"/>
    </location>
</feature>
<feature type="region of interest" description="Framework-1">
    <location>
        <begin position="1"/>
        <end position="23"/>
    </location>
</feature>
<feature type="region of interest" description="Complementarity-determining-1">
    <location>
        <begin position="24"/>
        <end position="39"/>
    </location>
</feature>
<feature type="region of interest" description="Framework-2">
    <location>
        <begin position="40"/>
        <end position="54"/>
    </location>
</feature>
<feature type="region of interest" description="Complementarity-determining-2">
    <location>
        <begin position="55"/>
        <end position="61"/>
    </location>
</feature>
<feature type="region of interest" description="Framework-3">
    <location>
        <begin position="62"/>
        <end position="93"/>
    </location>
</feature>
<feature type="region of interest" description="Complementarity-determining-3">
    <location>
        <begin position="94"/>
        <end position="102"/>
    </location>
</feature>
<feature type="region of interest" description="Framework-4">
    <location>
        <begin position="103"/>
        <end position="112"/>
    </location>
</feature>
<feature type="disulfide bond" evidence="1">
    <location>
        <begin position="23"/>
        <end position="93"/>
    </location>
</feature>
<feature type="non-terminal residue">
    <location>
        <position position="113"/>
    </location>
</feature>
<evidence type="ECO:0000255" key="1">
    <source>
        <dbReference type="PROSITE-ProRule" id="PRU00114"/>
    </source>
</evidence>
<accession>P03976</accession>
<proteinExistence type="evidence at protein level"/>
<organism>
    <name type="scientific">Mus musculus</name>
    <name type="common">Mouse</name>
    <dbReference type="NCBI Taxonomy" id="10090"/>
    <lineage>
        <taxon>Eukaryota</taxon>
        <taxon>Metazoa</taxon>
        <taxon>Chordata</taxon>
        <taxon>Craniata</taxon>
        <taxon>Vertebrata</taxon>
        <taxon>Euteleostomi</taxon>
        <taxon>Mammalia</taxon>
        <taxon>Eutheria</taxon>
        <taxon>Euarchontoglires</taxon>
        <taxon>Glires</taxon>
        <taxon>Rodentia</taxon>
        <taxon>Myomorpha</taxon>
        <taxon>Muroidea</taxon>
        <taxon>Muridae</taxon>
        <taxon>Murinae</taxon>
        <taxon>Mus</taxon>
        <taxon>Mus</taxon>
    </lineage>
</organism>
<reference key="1">
    <citation type="journal article" date="1984" name="Hoppe-Seyler's Z. Physiol. Chem.">
        <title>Murine V kappa 25 and V kappa 27 amino-acid sequences of C57B1/6 origin: monoclonal antibodies 17S29.1 and 22S25.1 specific for the group A-streptococcal polysaccharide.</title>
        <authorList>
            <person name="Aebersold R."/>
            <person name="Herbst H."/>
            <person name="Grutter T."/>
            <person name="Chang J.Y."/>
            <person name="Braun D.G."/>
        </authorList>
    </citation>
    <scope>PROTEIN SEQUENCE</scope>
    <source>
        <tissue>Hybridoma</tissue>
    </source>
</reference>
<dbReference type="PIR" id="A01912">
    <property type="entry name" value="KVMS17"/>
</dbReference>
<dbReference type="PDB" id="3CFB">
    <property type="method" value="X-ray"/>
    <property type="resolution" value="1.60 A"/>
    <property type="chains" value="A/L=1-113"/>
</dbReference>
<dbReference type="PDB" id="3CFC">
    <property type="method" value="X-ray"/>
    <property type="resolution" value="1.70 A"/>
    <property type="chains" value="L=1-113"/>
</dbReference>
<dbReference type="PDBsum" id="3CFB"/>
<dbReference type="PDBsum" id="3CFC"/>
<dbReference type="SMR" id="P03976"/>
<dbReference type="FunCoup" id="P03976">
    <property type="interactions" value="523"/>
</dbReference>
<dbReference type="CPTAC" id="non-CPTAC-3837"/>
<dbReference type="InParanoid" id="P03976"/>
<dbReference type="Proteomes" id="UP000000589">
    <property type="component" value="Unplaced"/>
</dbReference>
<dbReference type="RNAct" id="P03976">
    <property type="molecule type" value="protein"/>
</dbReference>
<dbReference type="GO" id="GO:0019814">
    <property type="term" value="C:immunoglobulin complex"/>
    <property type="evidence" value="ECO:0000318"/>
    <property type="project" value="GO_Central"/>
</dbReference>
<dbReference type="GO" id="GO:0002250">
    <property type="term" value="P:adaptive immune response"/>
    <property type="evidence" value="ECO:0007669"/>
    <property type="project" value="UniProtKB-KW"/>
</dbReference>
<dbReference type="GO" id="GO:0006955">
    <property type="term" value="P:immune response"/>
    <property type="evidence" value="ECO:0000318"/>
    <property type="project" value="GO_Central"/>
</dbReference>
<dbReference type="FunFam" id="2.60.40.10:FF:000365">
    <property type="entry name" value="If kappa light chain"/>
    <property type="match status" value="1"/>
</dbReference>
<dbReference type="Gene3D" id="2.60.40.10">
    <property type="entry name" value="Immunoglobulins"/>
    <property type="match status" value="1"/>
</dbReference>
<dbReference type="InterPro" id="IPR007110">
    <property type="entry name" value="Ig-like_dom"/>
</dbReference>
<dbReference type="InterPro" id="IPR036179">
    <property type="entry name" value="Ig-like_dom_sf"/>
</dbReference>
<dbReference type="InterPro" id="IPR013783">
    <property type="entry name" value="Ig-like_fold"/>
</dbReference>
<dbReference type="InterPro" id="IPR003599">
    <property type="entry name" value="Ig_sub"/>
</dbReference>
<dbReference type="InterPro" id="IPR013106">
    <property type="entry name" value="Ig_V-set"/>
</dbReference>
<dbReference type="InterPro" id="IPR050150">
    <property type="entry name" value="IgV_Light_Chain"/>
</dbReference>
<dbReference type="PANTHER" id="PTHR23267">
    <property type="entry name" value="IMMUNOGLOBULIN LIGHT CHAIN"/>
    <property type="match status" value="1"/>
</dbReference>
<dbReference type="Pfam" id="PF07686">
    <property type="entry name" value="V-set"/>
    <property type="match status" value="1"/>
</dbReference>
<dbReference type="SMART" id="SM00409">
    <property type="entry name" value="IG"/>
    <property type="match status" value="1"/>
</dbReference>
<dbReference type="SMART" id="SM00406">
    <property type="entry name" value="IGv"/>
    <property type="match status" value="1"/>
</dbReference>
<dbReference type="SUPFAM" id="SSF48726">
    <property type="entry name" value="Immunoglobulin"/>
    <property type="match status" value="1"/>
</dbReference>
<dbReference type="PROSITE" id="PS50835">
    <property type="entry name" value="IG_LIKE"/>
    <property type="match status" value="1"/>
</dbReference>